<organism>
    <name type="scientific">Aspergillus terreus (strain NIH 2624 / FGSC A1156)</name>
    <dbReference type="NCBI Taxonomy" id="341663"/>
    <lineage>
        <taxon>Eukaryota</taxon>
        <taxon>Fungi</taxon>
        <taxon>Dikarya</taxon>
        <taxon>Ascomycota</taxon>
        <taxon>Pezizomycotina</taxon>
        <taxon>Eurotiomycetes</taxon>
        <taxon>Eurotiomycetidae</taxon>
        <taxon>Eurotiales</taxon>
        <taxon>Aspergillaceae</taxon>
        <taxon>Aspergillus</taxon>
        <taxon>Aspergillus subgen. Circumdati</taxon>
    </lineage>
</organism>
<protein>
    <recommendedName>
        <fullName>Probable rhamnogalacturonate lyase B</fullName>
        <ecNumber>4.2.2.23</ecNumber>
    </recommendedName>
</protein>
<name>RGLB_ASPTN</name>
<comment type="function">
    <text evidence="1">Pectinolytic enzymes consist of four classes of enzymes: pectin lyase, polygalacturonase, pectin methylesterase and rhamnogalacturonase. Degrades the rhamnogalacturonan I (RG-I) backbone of pectin (By similarity).</text>
</comment>
<comment type="catalytic activity">
    <reaction>
        <text>Endotype eliminative cleavage of L-alpha-rhamnopyranosyl-(1-&gt;4)-alpha-D-galactopyranosyluronic acid bonds of rhamnogalacturonan I domains in ramified hairy regions of pectin leaving L-rhamnopyranose at the reducing end and 4-deoxy-4,5-unsaturated D-galactopyranosyluronic acid at the non-reducing end.</text>
        <dbReference type="EC" id="4.2.2.23"/>
    </reaction>
</comment>
<comment type="subcellular location">
    <subcellularLocation>
        <location evidence="1">Secreted</location>
    </subcellularLocation>
</comment>
<comment type="similarity">
    <text evidence="3">Belongs to the polysaccharide lyase 4 family.</text>
</comment>
<feature type="signal peptide" evidence="2">
    <location>
        <begin position="1"/>
        <end position="20"/>
    </location>
</feature>
<feature type="chain" id="PRO_0000394377" description="Probable rhamnogalacturonate lyase B">
    <location>
        <begin position="21"/>
        <end position="660"/>
    </location>
</feature>
<feature type="glycosylation site" description="N-linked (GlcNAc...) asparagine" evidence="2">
    <location>
        <position position="22"/>
    </location>
</feature>
<feature type="glycosylation site" description="N-linked (GlcNAc...) asparagine" evidence="2">
    <location>
        <position position="27"/>
    </location>
</feature>
<feature type="glycosylation site" description="N-linked (GlcNAc...) asparagine" evidence="2">
    <location>
        <position position="109"/>
    </location>
</feature>
<feature type="glycosylation site" description="N-linked (GlcNAc...) asparagine" evidence="2">
    <location>
        <position position="142"/>
    </location>
</feature>
<feature type="glycosylation site" description="N-linked (GlcNAc...) asparagine" evidence="2">
    <location>
        <position position="238"/>
    </location>
</feature>
<feature type="glycosylation site" description="N-linked (GlcNAc...) asparagine" evidence="2">
    <location>
        <position position="284"/>
    </location>
</feature>
<feature type="glycosylation site" description="N-linked (GlcNAc...) asparagine" evidence="2">
    <location>
        <position position="432"/>
    </location>
</feature>
<feature type="glycosylation site" description="N-linked (GlcNAc...) asparagine" evidence="2">
    <location>
        <position position="492"/>
    </location>
</feature>
<feature type="glycosylation site" description="N-linked (GlcNAc...) asparagine" evidence="2">
    <location>
        <position position="532"/>
    </location>
</feature>
<feature type="glycosylation site" description="N-linked (GlcNAc...) asparagine" evidence="2">
    <location>
        <position position="594"/>
    </location>
</feature>
<feature type="glycosylation site" description="N-linked (GlcNAc...) asparagine" evidence="2">
    <location>
        <position position="635"/>
    </location>
</feature>
<sequence length="660" mass="73513">MRLSVSLGLASLWTAIGATALNVSQTNSSITLANDRLTAIFSNAGKVVDLYLDGQDLLGPASGSTGVGPYLDCYCTPKGFYTAGSTTPRMEVVQGTDATGTQYAGVILNDTYTPTGQQFQQYWFLRDGETGLHMFSRLAYYNETTPFLRNLQEFRTLFRPNTDLWTHLTSSELQTAPLPSDEAVGKQVVVQDATWRFNNTPNDAYYTQFSEYFTKYTFSNAWRDNNVHGLYADGSTSNGTTFGAWLVMNTKDTYYGGPLHSDLTVDGIVYNYIVSNHHGEGTPNITNGFDRTFGPQFYLFNGGGSSSLNELRSEAESLADPSWNVEFYDSIAKHVVGYVPSSKRGSVQGQIKLPRGATRPIAILTVDGQYFQDNSVDPRSYQYWVEMDANGKFQLDHVVEGKYRLTVYADGIFGDYVRDGVQVRGRKTTRINDSWQPESAGVEVWRLGTPDKSSGEFLHGVARDPTHPLHPPEYLIYWGAYDWQQDFPNGVNYTIGSSDPATDFNTVHWSVFGPTPDNPDVEYDTTHDWAINFSLTKKQLQKRKTATLTIQLAGAKTASGNTDVYKPDEPYTNLALESYINQQEEPLTMLIGFNQSSSCIVRSAVSCYQVRSRMTFPADWLQVGSNTLTLHLPRNATDVEDAILPGTVYVQYDALRLELS</sequence>
<proteinExistence type="inferred from homology"/>
<evidence type="ECO:0000250" key="1"/>
<evidence type="ECO:0000255" key="2"/>
<evidence type="ECO:0000305" key="3"/>
<gene>
    <name type="primary">rglB</name>
    <name type="ORF">ATEG_10327</name>
</gene>
<reference key="1">
    <citation type="submission" date="2005-09" db="EMBL/GenBank/DDBJ databases">
        <title>Annotation of the Aspergillus terreus NIH2624 genome.</title>
        <authorList>
            <person name="Birren B.W."/>
            <person name="Lander E.S."/>
            <person name="Galagan J.E."/>
            <person name="Nusbaum C."/>
            <person name="Devon K."/>
            <person name="Henn M."/>
            <person name="Ma L.-J."/>
            <person name="Jaffe D.B."/>
            <person name="Butler J."/>
            <person name="Alvarez P."/>
            <person name="Gnerre S."/>
            <person name="Grabherr M."/>
            <person name="Kleber M."/>
            <person name="Mauceli E.W."/>
            <person name="Brockman W."/>
            <person name="Rounsley S."/>
            <person name="Young S.K."/>
            <person name="LaButti K."/>
            <person name="Pushparaj V."/>
            <person name="DeCaprio D."/>
            <person name="Crawford M."/>
            <person name="Koehrsen M."/>
            <person name="Engels R."/>
            <person name="Montgomery P."/>
            <person name="Pearson M."/>
            <person name="Howarth C."/>
            <person name="Larson L."/>
            <person name="Luoma S."/>
            <person name="White J."/>
            <person name="Alvarado L."/>
            <person name="Kodira C.D."/>
            <person name="Zeng Q."/>
            <person name="Oleary S."/>
            <person name="Yandava C."/>
            <person name="Denning D.W."/>
            <person name="Nierman W.C."/>
            <person name="Milne T."/>
            <person name="Madden K."/>
        </authorList>
    </citation>
    <scope>NUCLEOTIDE SEQUENCE [LARGE SCALE GENOMIC DNA]</scope>
    <source>
        <strain>NIH 2624 / FGSC A1156</strain>
    </source>
</reference>
<keyword id="KW-0119">Carbohydrate metabolism</keyword>
<keyword id="KW-0961">Cell wall biogenesis/degradation</keyword>
<keyword id="KW-0325">Glycoprotein</keyword>
<keyword id="KW-0456">Lyase</keyword>
<keyword id="KW-0624">Polysaccharide degradation</keyword>
<keyword id="KW-1185">Reference proteome</keyword>
<keyword id="KW-0964">Secreted</keyword>
<keyword id="KW-0732">Signal</keyword>
<dbReference type="EC" id="4.2.2.23"/>
<dbReference type="EMBL" id="CH476610">
    <property type="protein sequence ID" value="EAU29324.1"/>
    <property type="molecule type" value="Genomic_DNA"/>
</dbReference>
<dbReference type="RefSeq" id="XP_001218675.1">
    <property type="nucleotide sequence ID" value="XM_001218674.1"/>
</dbReference>
<dbReference type="SMR" id="Q0C7K7"/>
<dbReference type="STRING" id="341663.Q0C7K7"/>
<dbReference type="GlyCosmos" id="Q0C7K7">
    <property type="glycosylation" value="11 sites, No reported glycans"/>
</dbReference>
<dbReference type="EnsemblFungi" id="EAU29324">
    <property type="protein sequence ID" value="EAU29324"/>
    <property type="gene ID" value="ATEG_10327"/>
</dbReference>
<dbReference type="GeneID" id="4354631"/>
<dbReference type="VEuPathDB" id="FungiDB:ATEG_10327"/>
<dbReference type="eggNOG" id="ENOG502QQM5">
    <property type="taxonomic scope" value="Eukaryota"/>
</dbReference>
<dbReference type="HOGENOM" id="CLU_016624_0_0_1"/>
<dbReference type="OMA" id="ATWYLGN"/>
<dbReference type="OrthoDB" id="2130367at2759"/>
<dbReference type="Proteomes" id="UP000007963">
    <property type="component" value="Unassembled WGS sequence"/>
</dbReference>
<dbReference type="GO" id="GO:0005576">
    <property type="term" value="C:extracellular region"/>
    <property type="evidence" value="ECO:0007669"/>
    <property type="project" value="UniProtKB-SubCell"/>
</dbReference>
<dbReference type="GO" id="GO:0030246">
    <property type="term" value="F:carbohydrate binding"/>
    <property type="evidence" value="ECO:0007669"/>
    <property type="project" value="InterPro"/>
</dbReference>
<dbReference type="GO" id="GO:0102210">
    <property type="term" value="F:rhamnogalacturonan endolyase activity"/>
    <property type="evidence" value="ECO:0007669"/>
    <property type="project" value="UniProtKB-EC"/>
</dbReference>
<dbReference type="GO" id="GO:0071555">
    <property type="term" value="P:cell wall organization"/>
    <property type="evidence" value="ECO:0007669"/>
    <property type="project" value="UniProtKB-KW"/>
</dbReference>
<dbReference type="GO" id="GO:0000272">
    <property type="term" value="P:polysaccharide catabolic process"/>
    <property type="evidence" value="ECO:0007669"/>
    <property type="project" value="UniProtKB-KW"/>
</dbReference>
<dbReference type="CDD" id="cd10317">
    <property type="entry name" value="RGL4_C"/>
    <property type="match status" value="1"/>
</dbReference>
<dbReference type="CDD" id="cd10316">
    <property type="entry name" value="RGL4_M"/>
    <property type="match status" value="1"/>
</dbReference>
<dbReference type="CDD" id="cd10320">
    <property type="entry name" value="RGL4_N"/>
    <property type="match status" value="1"/>
</dbReference>
<dbReference type="Gene3D" id="2.70.98.10">
    <property type="match status" value="1"/>
</dbReference>
<dbReference type="Gene3D" id="2.60.40.1120">
    <property type="entry name" value="Carboxypeptidase-like, regulatory domain"/>
    <property type="match status" value="1"/>
</dbReference>
<dbReference type="Gene3D" id="2.60.120.260">
    <property type="entry name" value="Galactose-binding domain-like"/>
    <property type="match status" value="1"/>
</dbReference>
<dbReference type="InterPro" id="IPR013784">
    <property type="entry name" value="Carb-bd-like_fold"/>
</dbReference>
<dbReference type="InterPro" id="IPR011013">
    <property type="entry name" value="Gal_mutarotase_sf_dom"/>
</dbReference>
<dbReference type="InterPro" id="IPR008979">
    <property type="entry name" value="Galactose-bd-like_sf"/>
</dbReference>
<dbReference type="InterPro" id="IPR014718">
    <property type="entry name" value="GH-type_carb-bd"/>
</dbReference>
<dbReference type="InterPro" id="IPR051850">
    <property type="entry name" value="Polysacch_Lyase_4"/>
</dbReference>
<dbReference type="InterPro" id="IPR029413">
    <property type="entry name" value="RG-lyase_II"/>
</dbReference>
<dbReference type="InterPro" id="IPR029411">
    <property type="entry name" value="RG-lyase_III"/>
</dbReference>
<dbReference type="PANTHER" id="PTHR32018:SF9">
    <property type="entry name" value="RHAMNOGALACTURONATE LYASE B"/>
    <property type="match status" value="1"/>
</dbReference>
<dbReference type="PANTHER" id="PTHR32018">
    <property type="entry name" value="RHAMNOGALACTURONATE LYASE FAMILY PROTEIN"/>
    <property type="match status" value="1"/>
</dbReference>
<dbReference type="Pfam" id="PF14683">
    <property type="entry name" value="CBM-like"/>
    <property type="match status" value="1"/>
</dbReference>
<dbReference type="Pfam" id="PF14686">
    <property type="entry name" value="fn3_3"/>
    <property type="match status" value="1"/>
</dbReference>
<dbReference type="SUPFAM" id="SSF74650">
    <property type="entry name" value="Galactose mutarotase-like"/>
    <property type="match status" value="1"/>
</dbReference>
<dbReference type="SUPFAM" id="SSF49785">
    <property type="entry name" value="Galactose-binding domain-like"/>
    <property type="match status" value="1"/>
</dbReference>
<dbReference type="SUPFAM" id="SSF49452">
    <property type="entry name" value="Starch-binding domain-like"/>
    <property type="match status" value="1"/>
</dbReference>
<accession>Q0C7K7</accession>